<organism>
    <name type="scientific">Oryza sativa subsp. japonica</name>
    <name type="common">Rice</name>
    <dbReference type="NCBI Taxonomy" id="39947"/>
    <lineage>
        <taxon>Eukaryota</taxon>
        <taxon>Viridiplantae</taxon>
        <taxon>Streptophyta</taxon>
        <taxon>Embryophyta</taxon>
        <taxon>Tracheophyta</taxon>
        <taxon>Spermatophyta</taxon>
        <taxon>Magnoliopsida</taxon>
        <taxon>Liliopsida</taxon>
        <taxon>Poales</taxon>
        <taxon>Poaceae</taxon>
        <taxon>BOP clade</taxon>
        <taxon>Oryzoideae</taxon>
        <taxon>Oryzeae</taxon>
        <taxon>Oryzinae</taxon>
        <taxon>Oryza</taxon>
        <taxon>Oryza sativa</taxon>
    </lineage>
</organism>
<protein>
    <recommendedName>
        <fullName>Aquaporin NIP4-1</fullName>
    </recommendedName>
    <alternativeName>
        <fullName>NOD26-like intrinsic protein 4-1</fullName>
    </alternativeName>
    <alternativeName>
        <fullName>OsNIP4;1</fullName>
    </alternativeName>
</protein>
<accession>Q9ASI1</accession>
<accession>B9EYV7</accession>
<evidence type="ECO:0000250" key="1"/>
<evidence type="ECO:0000255" key="2"/>
<evidence type="ECO:0000269" key="3">
    <source>
    </source>
</evidence>
<evidence type="ECO:0000305" key="4"/>
<evidence type="ECO:0000312" key="5">
    <source>
        <dbReference type="EMBL" id="EEE53743.1"/>
    </source>
</evidence>
<feature type="chain" id="PRO_0000286038" description="Aquaporin NIP4-1">
    <location>
        <begin position="1"/>
        <end position="286"/>
    </location>
</feature>
<feature type="transmembrane region" description="Helical; Name=1" evidence="2">
    <location>
        <begin position="59"/>
        <end position="79"/>
    </location>
</feature>
<feature type="transmembrane region" description="Helical; Name=2" evidence="2">
    <location>
        <begin position="86"/>
        <end position="106"/>
    </location>
</feature>
<feature type="transmembrane region" description="Helical; Name=3" evidence="2">
    <location>
        <begin position="133"/>
        <end position="153"/>
    </location>
</feature>
<feature type="transmembrane region" description="Helical; Name=4" evidence="2">
    <location>
        <begin position="173"/>
        <end position="193"/>
    </location>
</feature>
<feature type="transmembrane region" description="Helical; Name=5" evidence="2">
    <location>
        <begin position="201"/>
        <end position="221"/>
    </location>
</feature>
<feature type="transmembrane region" description="Helical; Name=6" evidence="2">
    <location>
        <begin position="241"/>
        <end position="261"/>
    </location>
</feature>
<feature type="short sequence motif" description="NPA 1">
    <location>
        <begin position="112"/>
        <end position="114"/>
    </location>
</feature>
<feature type="short sequence motif" description="NPA 2">
    <location>
        <begin position="227"/>
        <end position="229"/>
    </location>
</feature>
<feature type="sequence conflict" description="In Ref. 6; AK106825." evidence="4" ref="6">
    <original>A</original>
    <variation>V</variation>
    <location>
        <position position="190"/>
    </location>
</feature>
<dbReference type="EMBL" id="AP002882">
    <property type="protein sequence ID" value="BAB39896.1"/>
    <property type="molecule type" value="Genomic_DNA"/>
</dbReference>
<dbReference type="EMBL" id="AP003219">
    <property type="protein sequence ID" value="BAB61180.1"/>
    <property type="molecule type" value="Genomic_DNA"/>
</dbReference>
<dbReference type="EMBL" id="AP008207">
    <property type="protein sequence ID" value="BAF03727.1"/>
    <property type="molecule type" value="Genomic_DNA"/>
</dbReference>
<dbReference type="EMBL" id="AP014957">
    <property type="protein sequence ID" value="BAS70030.1"/>
    <property type="molecule type" value="Genomic_DNA"/>
</dbReference>
<dbReference type="EMBL" id="CM000138">
    <property type="protein sequence ID" value="EEE53743.1"/>
    <property type="molecule type" value="Genomic_DNA"/>
</dbReference>
<dbReference type="EMBL" id="AK106825">
    <property type="status" value="NOT_ANNOTATED_CDS"/>
    <property type="molecule type" value="mRNA"/>
</dbReference>
<dbReference type="RefSeq" id="XP_015645985.1">
    <property type="nucleotide sequence ID" value="XM_015790499.1"/>
</dbReference>
<dbReference type="SMR" id="Q9ASI1"/>
<dbReference type="FunCoup" id="Q9ASI1">
    <property type="interactions" value="12"/>
</dbReference>
<dbReference type="STRING" id="39947.Q9ASI1"/>
<dbReference type="PaxDb" id="39947-Q9ASI1"/>
<dbReference type="EnsemblPlants" id="Os01t0112400-01">
    <property type="protein sequence ID" value="Os01t0112400-01"/>
    <property type="gene ID" value="Os01g0112400"/>
</dbReference>
<dbReference type="Gramene" id="Os01t0112400-01">
    <property type="protein sequence ID" value="Os01t0112400-01"/>
    <property type="gene ID" value="Os01g0112400"/>
</dbReference>
<dbReference type="KEGG" id="dosa:Os01g0112400"/>
<dbReference type="eggNOG" id="KOG0223">
    <property type="taxonomic scope" value="Eukaryota"/>
</dbReference>
<dbReference type="HOGENOM" id="CLU_020019_3_1_1"/>
<dbReference type="InParanoid" id="Q9ASI1"/>
<dbReference type="OMA" id="CGTSVGI"/>
<dbReference type="OrthoDB" id="3222at2759"/>
<dbReference type="Proteomes" id="UP000000763">
    <property type="component" value="Chromosome 1"/>
</dbReference>
<dbReference type="Proteomes" id="UP000007752">
    <property type="component" value="Chromosome 1"/>
</dbReference>
<dbReference type="Proteomes" id="UP000059680">
    <property type="component" value="Chromosome 1"/>
</dbReference>
<dbReference type="GO" id="GO:0016020">
    <property type="term" value="C:membrane"/>
    <property type="evidence" value="ECO:0007669"/>
    <property type="project" value="UniProtKB-SubCell"/>
</dbReference>
<dbReference type="GO" id="GO:0015267">
    <property type="term" value="F:channel activity"/>
    <property type="evidence" value="ECO:0007669"/>
    <property type="project" value="InterPro"/>
</dbReference>
<dbReference type="Gene3D" id="1.20.1080.10">
    <property type="entry name" value="Glycerol uptake facilitator protein"/>
    <property type="match status" value="1"/>
</dbReference>
<dbReference type="InterPro" id="IPR023271">
    <property type="entry name" value="Aquaporin-like"/>
</dbReference>
<dbReference type="InterPro" id="IPR034294">
    <property type="entry name" value="Aquaporin_transptr"/>
</dbReference>
<dbReference type="InterPro" id="IPR000425">
    <property type="entry name" value="MIP"/>
</dbReference>
<dbReference type="InterPro" id="IPR022357">
    <property type="entry name" value="MIP_CS"/>
</dbReference>
<dbReference type="PANTHER" id="PTHR45724">
    <property type="entry name" value="AQUAPORIN NIP2-1"/>
    <property type="match status" value="1"/>
</dbReference>
<dbReference type="PANTHER" id="PTHR45724:SF23">
    <property type="entry name" value="AQUAPORIN NIP4-1-RELATED"/>
    <property type="match status" value="1"/>
</dbReference>
<dbReference type="Pfam" id="PF00230">
    <property type="entry name" value="MIP"/>
    <property type="match status" value="1"/>
</dbReference>
<dbReference type="PRINTS" id="PR00783">
    <property type="entry name" value="MINTRINSICP"/>
</dbReference>
<dbReference type="SUPFAM" id="SSF81338">
    <property type="entry name" value="Aquaporin-like"/>
    <property type="match status" value="1"/>
</dbReference>
<dbReference type="PROSITE" id="PS00221">
    <property type="entry name" value="MIP"/>
    <property type="match status" value="1"/>
</dbReference>
<keyword id="KW-0472">Membrane</keyword>
<keyword id="KW-1185">Reference proteome</keyword>
<keyword id="KW-0677">Repeat</keyword>
<keyword id="KW-0812">Transmembrane</keyword>
<keyword id="KW-1133">Transmembrane helix</keyword>
<keyword id="KW-0813">Transport</keyword>
<reference key="1">
    <citation type="journal article" date="2002" name="Nature">
        <title>The genome sequence and structure of rice chromosome 1.</title>
        <authorList>
            <person name="Sasaki T."/>
            <person name="Matsumoto T."/>
            <person name="Yamamoto K."/>
            <person name="Sakata K."/>
            <person name="Baba T."/>
            <person name="Katayose Y."/>
            <person name="Wu J."/>
            <person name="Niimura Y."/>
            <person name="Cheng Z."/>
            <person name="Nagamura Y."/>
            <person name="Antonio B.A."/>
            <person name="Kanamori H."/>
            <person name="Hosokawa S."/>
            <person name="Masukawa M."/>
            <person name="Arikawa K."/>
            <person name="Chiden Y."/>
            <person name="Hayashi M."/>
            <person name="Okamoto M."/>
            <person name="Ando T."/>
            <person name="Aoki H."/>
            <person name="Arita K."/>
            <person name="Hamada M."/>
            <person name="Harada C."/>
            <person name="Hijishita S."/>
            <person name="Honda M."/>
            <person name="Ichikawa Y."/>
            <person name="Idonuma A."/>
            <person name="Iijima M."/>
            <person name="Ikeda M."/>
            <person name="Ikeno M."/>
            <person name="Ito S."/>
            <person name="Ito T."/>
            <person name="Ito Y."/>
            <person name="Ito Y."/>
            <person name="Iwabuchi A."/>
            <person name="Kamiya K."/>
            <person name="Karasawa W."/>
            <person name="Katagiri S."/>
            <person name="Kikuta A."/>
            <person name="Kobayashi N."/>
            <person name="Kono I."/>
            <person name="Machita K."/>
            <person name="Maehara T."/>
            <person name="Mizuno H."/>
            <person name="Mizubayashi T."/>
            <person name="Mukai Y."/>
            <person name="Nagasaki H."/>
            <person name="Nakashima M."/>
            <person name="Nakama Y."/>
            <person name="Nakamichi Y."/>
            <person name="Nakamura M."/>
            <person name="Namiki N."/>
            <person name="Negishi M."/>
            <person name="Ohta I."/>
            <person name="Ono N."/>
            <person name="Saji S."/>
            <person name="Sakai K."/>
            <person name="Shibata M."/>
            <person name="Shimokawa T."/>
            <person name="Shomura A."/>
            <person name="Song J."/>
            <person name="Takazaki Y."/>
            <person name="Terasawa K."/>
            <person name="Tsuji K."/>
            <person name="Waki K."/>
            <person name="Yamagata H."/>
            <person name="Yamane H."/>
            <person name="Yoshiki S."/>
            <person name="Yoshihara R."/>
            <person name="Yukawa K."/>
            <person name="Zhong H."/>
            <person name="Iwama H."/>
            <person name="Endo T."/>
            <person name="Ito H."/>
            <person name="Hahn J.H."/>
            <person name="Kim H.-I."/>
            <person name="Eun M.-Y."/>
            <person name="Yano M."/>
            <person name="Jiang J."/>
            <person name="Gojobori T."/>
        </authorList>
    </citation>
    <scope>NUCLEOTIDE SEQUENCE [LARGE SCALE GENOMIC DNA]</scope>
    <source>
        <strain>cv. Nipponbare</strain>
    </source>
</reference>
<reference key="2">
    <citation type="journal article" date="2005" name="Nature">
        <title>The map-based sequence of the rice genome.</title>
        <authorList>
            <consortium name="International rice genome sequencing project (IRGSP)"/>
        </authorList>
    </citation>
    <scope>NUCLEOTIDE SEQUENCE [LARGE SCALE GENOMIC DNA]</scope>
    <source>
        <strain>cv. Nipponbare</strain>
    </source>
</reference>
<reference key="3">
    <citation type="journal article" date="2008" name="Nucleic Acids Res.">
        <title>The rice annotation project database (RAP-DB): 2008 update.</title>
        <authorList>
            <consortium name="The rice annotation project (RAP)"/>
        </authorList>
    </citation>
    <scope>GENOME REANNOTATION</scope>
    <source>
        <strain>cv. Nipponbare</strain>
    </source>
</reference>
<reference key="4">
    <citation type="journal article" date="2013" name="Rice">
        <title>Improvement of the Oryza sativa Nipponbare reference genome using next generation sequence and optical map data.</title>
        <authorList>
            <person name="Kawahara Y."/>
            <person name="de la Bastide M."/>
            <person name="Hamilton J.P."/>
            <person name="Kanamori H."/>
            <person name="McCombie W.R."/>
            <person name="Ouyang S."/>
            <person name="Schwartz D.C."/>
            <person name="Tanaka T."/>
            <person name="Wu J."/>
            <person name="Zhou S."/>
            <person name="Childs K.L."/>
            <person name="Davidson R.M."/>
            <person name="Lin H."/>
            <person name="Quesada-Ocampo L."/>
            <person name="Vaillancourt B."/>
            <person name="Sakai H."/>
            <person name="Lee S.S."/>
            <person name="Kim J."/>
            <person name="Numa H."/>
            <person name="Itoh T."/>
            <person name="Buell C.R."/>
            <person name="Matsumoto T."/>
        </authorList>
    </citation>
    <scope>GENOME REANNOTATION</scope>
    <source>
        <strain>cv. Nipponbare</strain>
    </source>
</reference>
<reference key="5">
    <citation type="journal article" date="2005" name="PLoS Biol.">
        <title>The genomes of Oryza sativa: a history of duplications.</title>
        <authorList>
            <person name="Yu J."/>
            <person name="Wang J."/>
            <person name="Lin W."/>
            <person name="Li S."/>
            <person name="Li H."/>
            <person name="Zhou J."/>
            <person name="Ni P."/>
            <person name="Dong W."/>
            <person name="Hu S."/>
            <person name="Zeng C."/>
            <person name="Zhang J."/>
            <person name="Zhang Y."/>
            <person name="Li R."/>
            <person name="Xu Z."/>
            <person name="Li S."/>
            <person name="Li X."/>
            <person name="Zheng H."/>
            <person name="Cong L."/>
            <person name="Lin L."/>
            <person name="Yin J."/>
            <person name="Geng J."/>
            <person name="Li G."/>
            <person name="Shi J."/>
            <person name="Liu J."/>
            <person name="Lv H."/>
            <person name="Li J."/>
            <person name="Wang J."/>
            <person name="Deng Y."/>
            <person name="Ran L."/>
            <person name="Shi X."/>
            <person name="Wang X."/>
            <person name="Wu Q."/>
            <person name="Li C."/>
            <person name="Ren X."/>
            <person name="Wang J."/>
            <person name="Wang X."/>
            <person name="Li D."/>
            <person name="Liu D."/>
            <person name="Zhang X."/>
            <person name="Ji Z."/>
            <person name="Zhao W."/>
            <person name="Sun Y."/>
            <person name="Zhang Z."/>
            <person name="Bao J."/>
            <person name="Han Y."/>
            <person name="Dong L."/>
            <person name="Ji J."/>
            <person name="Chen P."/>
            <person name="Wu S."/>
            <person name="Liu J."/>
            <person name="Xiao Y."/>
            <person name="Bu D."/>
            <person name="Tan J."/>
            <person name="Yang L."/>
            <person name="Ye C."/>
            <person name="Zhang J."/>
            <person name="Xu J."/>
            <person name="Zhou Y."/>
            <person name="Yu Y."/>
            <person name="Zhang B."/>
            <person name="Zhuang S."/>
            <person name="Wei H."/>
            <person name="Liu B."/>
            <person name="Lei M."/>
            <person name="Yu H."/>
            <person name="Li Y."/>
            <person name="Xu H."/>
            <person name="Wei S."/>
            <person name="He X."/>
            <person name="Fang L."/>
            <person name="Zhang Z."/>
            <person name="Zhang Y."/>
            <person name="Huang X."/>
            <person name="Su Z."/>
            <person name="Tong W."/>
            <person name="Li J."/>
            <person name="Tong Z."/>
            <person name="Li S."/>
            <person name="Ye J."/>
            <person name="Wang L."/>
            <person name="Fang L."/>
            <person name="Lei T."/>
            <person name="Chen C.-S."/>
            <person name="Chen H.-C."/>
            <person name="Xu Z."/>
            <person name="Li H."/>
            <person name="Huang H."/>
            <person name="Zhang F."/>
            <person name="Xu H."/>
            <person name="Li N."/>
            <person name="Zhao C."/>
            <person name="Li S."/>
            <person name="Dong L."/>
            <person name="Huang Y."/>
            <person name="Li L."/>
            <person name="Xi Y."/>
            <person name="Qi Q."/>
            <person name="Li W."/>
            <person name="Zhang B."/>
            <person name="Hu W."/>
            <person name="Zhang Y."/>
            <person name="Tian X."/>
            <person name="Jiao Y."/>
            <person name="Liang X."/>
            <person name="Jin J."/>
            <person name="Gao L."/>
            <person name="Zheng W."/>
            <person name="Hao B."/>
            <person name="Liu S.-M."/>
            <person name="Wang W."/>
            <person name="Yuan L."/>
            <person name="Cao M."/>
            <person name="McDermott J."/>
            <person name="Samudrala R."/>
            <person name="Wang J."/>
            <person name="Wong G.K.-S."/>
            <person name="Yang H."/>
        </authorList>
    </citation>
    <scope>NUCLEOTIDE SEQUENCE [LARGE SCALE GENOMIC DNA]</scope>
    <source>
        <strain>cv. Nipponbare</strain>
    </source>
</reference>
<reference key="6">
    <citation type="journal article" date="2003" name="Science">
        <title>Collection, mapping, and annotation of over 28,000 cDNA clones from japonica rice.</title>
        <authorList>
            <consortium name="The rice full-length cDNA consortium"/>
        </authorList>
    </citation>
    <scope>NUCLEOTIDE SEQUENCE [LARGE SCALE MRNA]</scope>
    <source>
        <strain>cv. Nipponbare</strain>
    </source>
</reference>
<reference key="7">
    <citation type="journal article" date="2005" name="Plant Cell Physiol.">
        <title>Identification of 33 rice aquaporin genes and analysis of their expression and function.</title>
        <authorList>
            <person name="Sakurai J."/>
            <person name="Ishikawa F."/>
            <person name="Yamaguchi T."/>
            <person name="Uemura M."/>
            <person name="Maeshima M."/>
        </authorList>
    </citation>
    <scope>NOMENCLATURE</scope>
    <scope>TISSUE SPECIFICITY</scope>
</reference>
<comment type="function">
    <text evidence="1">Aquaporins facilitate the transport of water and small neutral solutes across cell membranes.</text>
</comment>
<comment type="subcellular location">
    <subcellularLocation>
        <location evidence="4">Membrane</location>
        <topology evidence="4">Multi-pass membrane protein</topology>
    </subcellularLocation>
</comment>
<comment type="tissue specificity">
    <text evidence="3">Expressed in leaves and at lower levels in roots.</text>
</comment>
<comment type="domain">
    <text>Aquaporins contain two tandem repeats each containing three membrane-spanning domains and a pore-forming loop with the signature motif Asn-Pro-Ala (NPA).</text>
</comment>
<comment type="similarity">
    <text evidence="4">Belongs to the MIP/aquaporin (TC 1.A.8) family. NIP (TC 1.A.8.12) subfamily.</text>
</comment>
<sequence length="286" mass="29806">MTTDHAGKKVDVVVVGNVDGEHVGVEQARHDLHEEAAAAAAADHHATRGLAIGFLIREVMVEGLASFLVVFWSCVAALMQEMYGTLTFPMVCLVVAMTVAFVLSWLGPAHFNPAVTITFAAYRRFPVWPKLPLYVAAQLAGSLLACLSVNAVMRPRHDHFYGTAPVVVHGTRLPFLMEFLASAVLMIVIATVATDGTAGKTVGGIAIGAAVGGLGLVIGPVSGGSMNPARTLGPAIVLGRYDGVWIYVVAPVAGMLVGALCNRAVRLSHRIVAFLCGTSVGIAGSP</sequence>
<name>NIP41_ORYSJ</name>
<gene>
    <name type="primary">NIP4-1</name>
    <name type="ordered locus">Os01g0112400</name>
    <name type="ordered locus">LOC_Os01g02190</name>
    <name evidence="5" type="ORF">OsJ_00101</name>
    <name type="ORF">OSJNBb0032H19.9</name>
    <name type="ORF">P0439B06.35</name>
</gene>
<proteinExistence type="evidence at transcript level"/>